<name>MURA_NITEC</name>
<gene>
    <name evidence="1" type="primary">murA</name>
    <name type="ordered locus">Neut_1556</name>
</gene>
<dbReference type="EC" id="2.5.1.7" evidence="1"/>
<dbReference type="EMBL" id="CP000450">
    <property type="protein sequence ID" value="ABI59800.1"/>
    <property type="molecule type" value="Genomic_DNA"/>
</dbReference>
<dbReference type="RefSeq" id="WP_011634606.1">
    <property type="nucleotide sequence ID" value="NC_008344.1"/>
</dbReference>
<dbReference type="SMR" id="Q0AFT2"/>
<dbReference type="STRING" id="335283.Neut_1556"/>
<dbReference type="KEGG" id="net:Neut_1556"/>
<dbReference type="eggNOG" id="COG0766">
    <property type="taxonomic scope" value="Bacteria"/>
</dbReference>
<dbReference type="HOGENOM" id="CLU_027387_0_0_4"/>
<dbReference type="OrthoDB" id="9803760at2"/>
<dbReference type="UniPathway" id="UPA00219"/>
<dbReference type="Proteomes" id="UP000001966">
    <property type="component" value="Chromosome"/>
</dbReference>
<dbReference type="GO" id="GO:0005737">
    <property type="term" value="C:cytoplasm"/>
    <property type="evidence" value="ECO:0007669"/>
    <property type="project" value="UniProtKB-SubCell"/>
</dbReference>
<dbReference type="GO" id="GO:0008760">
    <property type="term" value="F:UDP-N-acetylglucosamine 1-carboxyvinyltransferase activity"/>
    <property type="evidence" value="ECO:0007669"/>
    <property type="project" value="UniProtKB-UniRule"/>
</dbReference>
<dbReference type="GO" id="GO:0051301">
    <property type="term" value="P:cell division"/>
    <property type="evidence" value="ECO:0007669"/>
    <property type="project" value="UniProtKB-KW"/>
</dbReference>
<dbReference type="GO" id="GO:0071555">
    <property type="term" value="P:cell wall organization"/>
    <property type="evidence" value="ECO:0007669"/>
    <property type="project" value="UniProtKB-KW"/>
</dbReference>
<dbReference type="GO" id="GO:0009252">
    <property type="term" value="P:peptidoglycan biosynthetic process"/>
    <property type="evidence" value="ECO:0007669"/>
    <property type="project" value="UniProtKB-UniRule"/>
</dbReference>
<dbReference type="GO" id="GO:0008360">
    <property type="term" value="P:regulation of cell shape"/>
    <property type="evidence" value="ECO:0007669"/>
    <property type="project" value="UniProtKB-KW"/>
</dbReference>
<dbReference type="GO" id="GO:0019277">
    <property type="term" value="P:UDP-N-acetylgalactosamine biosynthetic process"/>
    <property type="evidence" value="ECO:0007669"/>
    <property type="project" value="InterPro"/>
</dbReference>
<dbReference type="CDD" id="cd01555">
    <property type="entry name" value="UdpNAET"/>
    <property type="match status" value="1"/>
</dbReference>
<dbReference type="FunFam" id="3.65.10.10:FF:000001">
    <property type="entry name" value="UDP-N-acetylglucosamine 1-carboxyvinyltransferase"/>
    <property type="match status" value="1"/>
</dbReference>
<dbReference type="Gene3D" id="3.65.10.10">
    <property type="entry name" value="Enolpyruvate transferase domain"/>
    <property type="match status" value="2"/>
</dbReference>
<dbReference type="HAMAP" id="MF_00111">
    <property type="entry name" value="MurA"/>
    <property type="match status" value="1"/>
</dbReference>
<dbReference type="InterPro" id="IPR001986">
    <property type="entry name" value="Enolpyruvate_Tfrase_dom"/>
</dbReference>
<dbReference type="InterPro" id="IPR036968">
    <property type="entry name" value="Enolpyruvate_Tfrase_sf"/>
</dbReference>
<dbReference type="InterPro" id="IPR050068">
    <property type="entry name" value="MurA_subfamily"/>
</dbReference>
<dbReference type="InterPro" id="IPR013792">
    <property type="entry name" value="RNA3'P_cycl/enolpyr_Trfase_a/b"/>
</dbReference>
<dbReference type="InterPro" id="IPR005750">
    <property type="entry name" value="UDP_GlcNAc_COvinyl_MurA"/>
</dbReference>
<dbReference type="NCBIfam" id="TIGR01072">
    <property type="entry name" value="murA"/>
    <property type="match status" value="1"/>
</dbReference>
<dbReference type="NCBIfam" id="NF006873">
    <property type="entry name" value="PRK09369.1"/>
    <property type="match status" value="1"/>
</dbReference>
<dbReference type="PANTHER" id="PTHR43783">
    <property type="entry name" value="UDP-N-ACETYLGLUCOSAMINE 1-CARBOXYVINYLTRANSFERASE"/>
    <property type="match status" value="1"/>
</dbReference>
<dbReference type="PANTHER" id="PTHR43783:SF1">
    <property type="entry name" value="UDP-N-ACETYLGLUCOSAMINE 1-CARBOXYVINYLTRANSFERASE"/>
    <property type="match status" value="1"/>
</dbReference>
<dbReference type="Pfam" id="PF00275">
    <property type="entry name" value="EPSP_synthase"/>
    <property type="match status" value="1"/>
</dbReference>
<dbReference type="SUPFAM" id="SSF55205">
    <property type="entry name" value="EPT/RTPC-like"/>
    <property type="match status" value="1"/>
</dbReference>
<proteinExistence type="inferred from homology"/>
<protein>
    <recommendedName>
        <fullName evidence="1">UDP-N-acetylglucosamine 1-carboxyvinyltransferase</fullName>
        <ecNumber evidence="1">2.5.1.7</ecNumber>
    </recommendedName>
    <alternativeName>
        <fullName evidence="1">Enoylpyruvate transferase</fullName>
    </alternativeName>
    <alternativeName>
        <fullName evidence="1">UDP-N-acetylglucosamine enolpyruvyl transferase</fullName>
        <shortName evidence="1">EPT</shortName>
    </alternativeName>
</protein>
<organism>
    <name type="scientific">Nitrosomonas eutropha (strain DSM 101675 / C91 / Nm57)</name>
    <dbReference type="NCBI Taxonomy" id="335283"/>
    <lineage>
        <taxon>Bacteria</taxon>
        <taxon>Pseudomonadati</taxon>
        <taxon>Pseudomonadota</taxon>
        <taxon>Betaproteobacteria</taxon>
        <taxon>Nitrosomonadales</taxon>
        <taxon>Nitrosomonadaceae</taxon>
        <taxon>Nitrosomonas</taxon>
    </lineage>
</organism>
<reference key="1">
    <citation type="journal article" date="2007" name="Environ. Microbiol.">
        <title>Whole-genome analysis of the ammonia-oxidizing bacterium, Nitrosomonas eutropha C91: implications for niche adaptation.</title>
        <authorList>
            <person name="Stein L.Y."/>
            <person name="Arp D.J."/>
            <person name="Berube P.M."/>
            <person name="Chain P.S."/>
            <person name="Hauser L."/>
            <person name="Jetten M.S."/>
            <person name="Klotz M.G."/>
            <person name="Larimer F.W."/>
            <person name="Norton J.M."/>
            <person name="Op den Camp H.J.M."/>
            <person name="Shin M."/>
            <person name="Wei X."/>
        </authorList>
    </citation>
    <scope>NUCLEOTIDE SEQUENCE [LARGE SCALE GENOMIC DNA]</scope>
    <source>
        <strain>DSM 101675 / C91 / Nm57</strain>
    </source>
</reference>
<comment type="function">
    <text evidence="1">Cell wall formation. Adds enolpyruvyl to UDP-N-acetylglucosamine.</text>
</comment>
<comment type="catalytic activity">
    <reaction evidence="1">
        <text>phosphoenolpyruvate + UDP-N-acetyl-alpha-D-glucosamine = UDP-N-acetyl-3-O-(1-carboxyvinyl)-alpha-D-glucosamine + phosphate</text>
        <dbReference type="Rhea" id="RHEA:18681"/>
        <dbReference type="ChEBI" id="CHEBI:43474"/>
        <dbReference type="ChEBI" id="CHEBI:57705"/>
        <dbReference type="ChEBI" id="CHEBI:58702"/>
        <dbReference type="ChEBI" id="CHEBI:68483"/>
        <dbReference type="EC" id="2.5.1.7"/>
    </reaction>
</comment>
<comment type="pathway">
    <text evidence="1">Cell wall biogenesis; peptidoglycan biosynthesis.</text>
</comment>
<comment type="subcellular location">
    <subcellularLocation>
        <location evidence="1">Cytoplasm</location>
    </subcellularLocation>
</comment>
<comment type="similarity">
    <text evidence="1">Belongs to the EPSP synthase family. MurA subfamily.</text>
</comment>
<accession>Q0AFT2</accession>
<feature type="chain" id="PRO_1000023059" description="UDP-N-acetylglucosamine 1-carboxyvinyltransferase">
    <location>
        <begin position="1"/>
        <end position="417"/>
    </location>
</feature>
<feature type="active site" description="Proton donor" evidence="1">
    <location>
        <position position="117"/>
    </location>
</feature>
<feature type="binding site" evidence="1">
    <location>
        <begin position="22"/>
        <end position="23"/>
    </location>
    <ligand>
        <name>phosphoenolpyruvate</name>
        <dbReference type="ChEBI" id="CHEBI:58702"/>
    </ligand>
</feature>
<feature type="binding site" evidence="1">
    <location>
        <position position="93"/>
    </location>
    <ligand>
        <name>UDP-N-acetyl-alpha-D-glucosamine</name>
        <dbReference type="ChEBI" id="CHEBI:57705"/>
    </ligand>
</feature>
<feature type="binding site" evidence="1">
    <location>
        <begin position="122"/>
        <end position="126"/>
    </location>
    <ligand>
        <name>UDP-N-acetyl-alpha-D-glucosamine</name>
        <dbReference type="ChEBI" id="CHEBI:57705"/>
    </ligand>
</feature>
<feature type="binding site" evidence="1">
    <location>
        <position position="305"/>
    </location>
    <ligand>
        <name>UDP-N-acetyl-alpha-D-glucosamine</name>
        <dbReference type="ChEBI" id="CHEBI:57705"/>
    </ligand>
</feature>
<feature type="binding site" evidence="1">
    <location>
        <position position="327"/>
    </location>
    <ligand>
        <name>UDP-N-acetyl-alpha-D-glucosamine</name>
        <dbReference type="ChEBI" id="CHEBI:57705"/>
    </ligand>
</feature>
<feature type="modified residue" description="2-(S-cysteinyl)pyruvic acid O-phosphothioketal" evidence="1">
    <location>
        <position position="117"/>
    </location>
</feature>
<keyword id="KW-0131">Cell cycle</keyword>
<keyword id="KW-0132">Cell division</keyword>
<keyword id="KW-0133">Cell shape</keyword>
<keyword id="KW-0961">Cell wall biogenesis/degradation</keyword>
<keyword id="KW-0963">Cytoplasm</keyword>
<keyword id="KW-0573">Peptidoglycan synthesis</keyword>
<keyword id="KW-0670">Pyruvate</keyword>
<keyword id="KW-0808">Transferase</keyword>
<evidence type="ECO:0000255" key="1">
    <source>
        <dbReference type="HAMAP-Rule" id="MF_00111"/>
    </source>
</evidence>
<sequence length="417" mass="44095">MQKLVIHGGSKLHGEISISGAKNAALPVLCASLLTAEPFAIQNIPHLRDVTTMLALLEQIGVRILTNEPGTTELSAANITNPTASYDMVKTMRAAILVLGPLLARTGQAHISLPGGCAIGMRPVDQHIKGLQAMGAEINIEQGYILAQVGRLSGARIAMDVVTVTGTENLMMAATLASGTTILENAAREPEVIDLANCLIGMGAKIEGAGNDIIIIEGVDRLHGGSHVVMPDRIETGTFLTAVAACGGDVTLIGTRADTLDVVLGKLAEAGADIDIGGDWIRLCMQQRPQPVSLRTAPYPAFPTDMQAQFMALNSIAGGTSIMTETIFENRFMHVQELTRLNADIQVEGNTAIVHGIPQLDGASVMATDLRASACLIIAGLIAQGETIVDRIYHLDRGYEQIEQKLAQVGAHIKRIN</sequence>